<comment type="function">
    <text evidence="1">Catalyzes the ATP-dependent phosphorylation of the 3-deoxy-D-manno-octulosonic acid (Kdo) residue in Kdo-lipid IV(A) at the 4-OH position.</text>
</comment>
<comment type="catalytic activity">
    <reaction>
        <text>an alpha-Kdo-(2-&gt;6)-lipid IVA + ATP = a 4-O-phospho-alpha-Kdo-(2-&gt;6)-lipid IVA + ADP + H(+)</text>
        <dbReference type="Rhea" id="RHEA:74271"/>
        <dbReference type="ChEBI" id="CHEBI:15378"/>
        <dbReference type="ChEBI" id="CHEBI:30616"/>
        <dbReference type="ChEBI" id="CHEBI:176428"/>
        <dbReference type="ChEBI" id="CHEBI:193140"/>
        <dbReference type="ChEBI" id="CHEBI:456216"/>
        <dbReference type="EC" id="2.7.1.166"/>
    </reaction>
</comment>
<comment type="pathway">
    <text>Bacterial outer membrane biogenesis; LPS core biosynthesis.</text>
</comment>
<comment type="subcellular location">
    <subcellularLocation>
        <location evidence="1">Cell inner membrane</location>
        <topology evidence="1">Peripheral membrane protein</topology>
        <orientation evidence="1">Cytoplasmic side</orientation>
    </subcellularLocation>
</comment>
<comment type="similarity">
    <text evidence="3">Belongs to the protein kinase superfamily. KdkA/RfaP family.</text>
</comment>
<feature type="chain" id="PRO_0000194315" description="3-deoxy-D-manno-octulosonic acid kinase">
    <location>
        <begin position="1"/>
        <end position="240"/>
    </location>
</feature>
<feature type="active site" evidence="2">
    <location>
        <position position="167"/>
    </location>
</feature>
<proteinExistence type="inferred from homology"/>
<protein>
    <recommendedName>
        <fullName>3-deoxy-D-manno-octulosonic acid kinase</fullName>
        <shortName>Kdo kinase</shortName>
        <ecNumber>2.7.1.166</ecNumber>
    </recommendedName>
</protein>
<name>KDKA_PHODP</name>
<organism>
    <name type="scientific">Photobacterium damsela subsp. piscicida</name>
    <name type="common">Pasteurella piscicida</name>
    <dbReference type="NCBI Taxonomy" id="38294"/>
    <lineage>
        <taxon>Bacteria</taxon>
        <taxon>Pseudomonadati</taxon>
        <taxon>Pseudomonadota</taxon>
        <taxon>Gammaproteobacteria</taxon>
        <taxon>Vibrionales</taxon>
        <taxon>Vibrionaceae</taxon>
        <taxon>Photobacterium</taxon>
    </lineage>
</organism>
<evidence type="ECO:0000250" key="1"/>
<evidence type="ECO:0000255" key="2"/>
<evidence type="ECO:0000305" key="3"/>
<sequence>MQIIQTKQQYICYNPELLTETPEMAFSSEFWQQQNKIIGSAQGRGTTWFVQGEKLAMALRHYRRGGLFGKLVADSYLFSGWDKTRSVAEFSLLNHLIAHQVNVPKPVAARAVRLGWFRYQADILVEKIANSRDLVGILGQETLSQQVWFDVGAMIKRMHDAGVCHTDLNCHNIILDDHKTVWIIDFDKCYRLEGANWQEKNLARLHRSFIKEQGKRGILFNEDNWQWLCKVIRVNGNKGQ</sequence>
<keyword id="KW-0067">ATP-binding</keyword>
<keyword id="KW-0997">Cell inner membrane</keyword>
<keyword id="KW-1003">Cell membrane</keyword>
<keyword id="KW-0418">Kinase</keyword>
<keyword id="KW-0448">Lipopolysaccharide biosynthesis</keyword>
<keyword id="KW-0472">Membrane</keyword>
<keyword id="KW-0547">Nucleotide-binding</keyword>
<keyword id="KW-0808">Transferase</keyword>
<accession>P58551</accession>
<gene>
    <name type="primary">kdkA</name>
</gene>
<dbReference type="EC" id="2.7.1.166"/>
<dbReference type="EMBL" id="AB074287">
    <property type="protein sequence ID" value="BAB72027.1"/>
    <property type="molecule type" value="Genomic_DNA"/>
</dbReference>
<dbReference type="SMR" id="P58551"/>
<dbReference type="UniPathway" id="UPA00958"/>
<dbReference type="GO" id="GO:0005886">
    <property type="term" value="C:plasma membrane"/>
    <property type="evidence" value="ECO:0007669"/>
    <property type="project" value="UniProtKB-SubCell"/>
</dbReference>
<dbReference type="GO" id="GO:0005524">
    <property type="term" value="F:ATP binding"/>
    <property type="evidence" value="ECO:0007669"/>
    <property type="project" value="UniProtKB-UniRule"/>
</dbReference>
<dbReference type="GO" id="GO:0004672">
    <property type="term" value="F:protein kinase activity"/>
    <property type="evidence" value="ECO:0007669"/>
    <property type="project" value="InterPro"/>
</dbReference>
<dbReference type="GO" id="GO:0009244">
    <property type="term" value="P:lipopolysaccharide core region biosynthetic process"/>
    <property type="evidence" value="ECO:0007669"/>
    <property type="project" value="UniProtKB-UniRule"/>
</dbReference>
<dbReference type="Gene3D" id="1.10.510.10">
    <property type="entry name" value="Transferase(Phosphotransferase) domain 1"/>
    <property type="match status" value="1"/>
</dbReference>
<dbReference type="HAMAP" id="MF_00521">
    <property type="entry name" value="KDO_kinase"/>
    <property type="match status" value="1"/>
</dbReference>
<dbReference type="InterPro" id="IPR022826">
    <property type="entry name" value="KDO_kinase"/>
</dbReference>
<dbReference type="InterPro" id="IPR011009">
    <property type="entry name" value="Kinase-like_dom_sf"/>
</dbReference>
<dbReference type="InterPro" id="IPR000719">
    <property type="entry name" value="Prot_kinase_dom"/>
</dbReference>
<dbReference type="NCBIfam" id="NF002475">
    <property type="entry name" value="PRK01723.1"/>
    <property type="match status" value="1"/>
</dbReference>
<dbReference type="Pfam" id="PF06293">
    <property type="entry name" value="Kdo"/>
    <property type="match status" value="1"/>
</dbReference>
<dbReference type="SUPFAM" id="SSF56112">
    <property type="entry name" value="Protein kinase-like (PK-like)"/>
    <property type="match status" value="1"/>
</dbReference>
<reference key="1">
    <citation type="submission" date="2001-11" db="EMBL/GenBank/DDBJ databases">
        <title>Molecular cloning and characterization of the region encoding for lipopolysaccharide biosynthesis in Pasteurella piscicida.</title>
        <authorList>
            <person name="Rattanachai A."/>
            <person name="Hirono I."/>
            <person name="Aoki T."/>
        </authorList>
    </citation>
    <scope>NUCLEOTIDE SEQUENCE [GENOMIC DNA]</scope>
</reference>